<gene>
    <name type="primary">psaA</name>
    <name type="ordered locus">YPK_2759</name>
</gene>
<comment type="function">
    <text>Fibrillar structure, part of fimbriae, necessary for full virulence.</text>
</comment>
<comment type="subunit">
    <text evidence="1">Forms a homomer composed of subunits assembled in a large structure.</text>
</comment>
<comment type="subcellular location">
    <subcellularLocation>
        <location>Fimbrium</location>
    </subcellularLocation>
</comment>
<comment type="sequence caution" evidence="3">
    <conflict type="erroneous initiation">
        <sequence resource="EMBL-CDS" id="AAC37056"/>
    </conflict>
</comment>
<protein>
    <recommendedName>
        <fullName>pH 6 antigen</fullName>
    </recommendedName>
    <alternativeName>
        <fullName>Adhesin</fullName>
    </alternativeName>
    <alternativeName>
        <fullName>Antigen 4</fullName>
    </alternativeName>
</protein>
<sequence>MKMKCFAKNALAVTTLMIAACGMANASTVINSKDVSGEVTVKQGNTFHVDFAPNTGEIFAGKQPGDVTMFTLTMGDTAPHGGWRLIPTGDSKGGYMISADGDYVGLYSYMMSWVGIDNNWYINDDSPKDIKDHLYVKAGTVLKPTTYKFTGRVEEYVF</sequence>
<feature type="signal peptide" evidence="2">
    <location>
        <begin position="1"/>
        <end position="26"/>
    </location>
</feature>
<feature type="chain" id="PRO_0000350549" description="pH 6 antigen">
    <location>
        <begin position="27"/>
        <end position="158"/>
    </location>
</feature>
<feature type="sequence conflict" description="In Ref. 1; AAC37056." evidence="3" ref="1">
    <original>M</original>
    <variation>V</variation>
    <location>
        <position position="110"/>
    </location>
</feature>
<proteinExistence type="inferred from homology"/>
<accession>B1JS09</accession>
<accession>Q56982</accession>
<accession>Q66CR8</accession>
<dbReference type="EMBL" id="L76301">
    <property type="protein sequence ID" value="AAC37056.1"/>
    <property type="status" value="ALT_INIT"/>
    <property type="molecule type" value="Genomic_DNA"/>
</dbReference>
<dbReference type="EMBL" id="CP000950">
    <property type="protein sequence ID" value="ACA69036.1"/>
    <property type="molecule type" value="Genomic_DNA"/>
</dbReference>
<dbReference type="RefSeq" id="WP_002208794.1">
    <property type="nucleotide sequence ID" value="NZ_CP009792.1"/>
</dbReference>
<dbReference type="SMR" id="B1JS09"/>
<dbReference type="GeneID" id="57977435"/>
<dbReference type="KEGG" id="ypy:YPK_2759"/>
<dbReference type="PATRIC" id="fig|502800.11.peg.3466"/>
<dbReference type="GO" id="GO:0009289">
    <property type="term" value="C:pilus"/>
    <property type="evidence" value="ECO:0007669"/>
    <property type="project" value="UniProtKB-SubCell"/>
</dbReference>
<dbReference type="CDD" id="cd18777">
    <property type="entry name" value="PsaA_MyfA"/>
    <property type="match status" value="1"/>
</dbReference>
<dbReference type="Gene3D" id="2.60.40.3590">
    <property type="match status" value="2"/>
</dbReference>
<dbReference type="InterPro" id="IPR053731">
    <property type="entry name" value="Fimbrial_Virulence_Factor"/>
</dbReference>
<dbReference type="InterPro" id="IPR048725">
    <property type="entry name" value="MyfA_PsaA"/>
</dbReference>
<dbReference type="NCBIfam" id="NF037938">
    <property type="entry name" value="Myr_Ysa_major"/>
    <property type="match status" value="1"/>
</dbReference>
<dbReference type="Pfam" id="PF21462">
    <property type="entry name" value="PsaS"/>
    <property type="match status" value="1"/>
</dbReference>
<dbReference type="PROSITE" id="PS51257">
    <property type="entry name" value="PROKAR_LIPOPROTEIN"/>
    <property type="match status" value="1"/>
</dbReference>
<evidence type="ECO:0000250" key="1"/>
<evidence type="ECO:0000255" key="2">
    <source>
        <dbReference type="PROSITE-ProRule" id="PRU00303"/>
    </source>
</evidence>
<evidence type="ECO:0000305" key="3"/>
<name>PSAA_YERPY</name>
<keyword id="KW-0281">Fimbrium</keyword>
<keyword id="KW-0732">Signal</keyword>
<keyword id="KW-0843">Virulence</keyword>
<organism>
    <name type="scientific">Yersinia pseudotuberculosis serotype O:3 (strain YPIII)</name>
    <dbReference type="NCBI Taxonomy" id="502800"/>
    <lineage>
        <taxon>Bacteria</taxon>
        <taxon>Pseudomonadati</taxon>
        <taxon>Pseudomonadota</taxon>
        <taxon>Gammaproteobacteria</taxon>
        <taxon>Enterobacterales</taxon>
        <taxon>Yersiniaceae</taxon>
        <taxon>Yersinia</taxon>
    </lineage>
</organism>
<reference key="1">
    <citation type="journal article" date="1996" name="Infect. Immun.">
        <title>The psa locus is responsible for thermoinducible binding of Yersinia pseudotuberculosis to cultured cells.</title>
        <authorList>
            <person name="Yang Y."/>
            <person name="Merriam J.J."/>
            <person name="Mueller J.P."/>
            <person name="Isberg R.R."/>
        </authorList>
    </citation>
    <scope>NUCLEOTIDE SEQUENCE [GENOMIC DNA]</scope>
</reference>
<reference key="2">
    <citation type="submission" date="2008-02" db="EMBL/GenBank/DDBJ databases">
        <title>Complete sequence of Yersinia pseudotuberculosis YPIII.</title>
        <authorList>
            <consortium name="US DOE Joint Genome Institute"/>
            <person name="Copeland A."/>
            <person name="Lucas S."/>
            <person name="Lapidus A."/>
            <person name="Glavina del Rio T."/>
            <person name="Dalin E."/>
            <person name="Tice H."/>
            <person name="Bruce D."/>
            <person name="Goodwin L."/>
            <person name="Pitluck S."/>
            <person name="Munk A.C."/>
            <person name="Brettin T."/>
            <person name="Detter J.C."/>
            <person name="Han C."/>
            <person name="Tapia R."/>
            <person name="Schmutz J."/>
            <person name="Larimer F."/>
            <person name="Land M."/>
            <person name="Hauser L."/>
            <person name="Challacombe J.F."/>
            <person name="Green L."/>
            <person name="Lindler L.E."/>
            <person name="Nikolich M.P."/>
            <person name="Richardson P."/>
        </authorList>
    </citation>
    <scope>NUCLEOTIDE SEQUENCE [LARGE SCALE GENOMIC DNA]</scope>
    <source>
        <strain>YPIII</strain>
    </source>
</reference>